<feature type="chain" id="PRO_0000299650" description="Putative uncharacterized protein YLR434C">
    <location>
        <begin position="1"/>
        <end position="127"/>
    </location>
</feature>
<gene>
    <name type="ordered locus">YLR434C</name>
</gene>
<protein>
    <recommendedName>
        <fullName>Putative uncharacterized protein YLR434C</fullName>
    </recommendedName>
</protein>
<sequence length="127" mass="15101">MLSHQYIVCSLFRKDYHYKNFSQISLDSTFLPVAINTNCLNHFDIHLYLFQNFSCHRLLKHEFSNSEKERTTGKQKGKMYKSFNVFESRGIIIKERSKAFNICFIKGIIQRKVFLDSFFFDVLAQLP</sequence>
<reference key="1">
    <citation type="journal article" date="1997" name="Nature">
        <title>The nucleotide sequence of Saccharomyces cerevisiae chromosome XII.</title>
        <authorList>
            <person name="Johnston M."/>
            <person name="Hillier L.W."/>
            <person name="Riles L."/>
            <person name="Albermann K."/>
            <person name="Andre B."/>
            <person name="Ansorge W."/>
            <person name="Benes V."/>
            <person name="Brueckner M."/>
            <person name="Delius H."/>
            <person name="Dubois E."/>
            <person name="Duesterhoeft A."/>
            <person name="Entian K.-D."/>
            <person name="Floeth M."/>
            <person name="Goffeau A."/>
            <person name="Hebling U."/>
            <person name="Heumann K."/>
            <person name="Heuss-Neitzel D."/>
            <person name="Hilbert H."/>
            <person name="Hilger F."/>
            <person name="Kleine K."/>
            <person name="Koetter P."/>
            <person name="Louis E.J."/>
            <person name="Messenguy F."/>
            <person name="Mewes H.-W."/>
            <person name="Miosga T."/>
            <person name="Moestl D."/>
            <person name="Mueller-Auer S."/>
            <person name="Nentwich U."/>
            <person name="Obermaier B."/>
            <person name="Piravandi E."/>
            <person name="Pohl T.M."/>
            <person name="Portetelle D."/>
            <person name="Purnelle B."/>
            <person name="Rechmann S."/>
            <person name="Rieger M."/>
            <person name="Rinke M."/>
            <person name="Rose M."/>
            <person name="Scharfe M."/>
            <person name="Scherens B."/>
            <person name="Scholler P."/>
            <person name="Schwager C."/>
            <person name="Schwarz S."/>
            <person name="Underwood A.P."/>
            <person name="Urrestarazu L.A."/>
            <person name="Vandenbol M."/>
            <person name="Verhasselt P."/>
            <person name="Vierendeels F."/>
            <person name="Voet M."/>
            <person name="Volckaert G."/>
            <person name="Voss H."/>
            <person name="Wambutt R."/>
            <person name="Wedler E."/>
            <person name="Wedler H."/>
            <person name="Zimmermann F.K."/>
            <person name="Zollner A."/>
            <person name="Hani J."/>
            <person name="Hoheisel J.D."/>
        </authorList>
    </citation>
    <scope>NUCLEOTIDE SEQUENCE [LARGE SCALE GENOMIC DNA]</scope>
    <source>
        <strain>ATCC 204508 / S288c</strain>
    </source>
</reference>
<reference key="2">
    <citation type="journal article" date="2014" name="G3 (Bethesda)">
        <title>The reference genome sequence of Saccharomyces cerevisiae: Then and now.</title>
        <authorList>
            <person name="Engel S.R."/>
            <person name="Dietrich F.S."/>
            <person name="Fisk D.G."/>
            <person name="Binkley G."/>
            <person name="Balakrishnan R."/>
            <person name="Costanzo M.C."/>
            <person name="Dwight S.S."/>
            <person name="Hitz B.C."/>
            <person name="Karra K."/>
            <person name="Nash R.S."/>
            <person name="Weng S."/>
            <person name="Wong E.D."/>
            <person name="Lloyd P."/>
            <person name="Skrzypek M.S."/>
            <person name="Miyasato S.R."/>
            <person name="Simison M."/>
            <person name="Cherry J.M."/>
        </authorList>
    </citation>
    <scope>GENOME REANNOTATION</scope>
    <source>
        <strain>ATCC 204508 / S288c</strain>
    </source>
</reference>
<reference key="3">
    <citation type="journal article" date="2007" name="Genome Res.">
        <title>Approaching a complete repository of sequence-verified protein-encoding clones for Saccharomyces cerevisiae.</title>
        <authorList>
            <person name="Hu Y."/>
            <person name="Rolfs A."/>
            <person name="Bhullar B."/>
            <person name="Murthy T.V.S."/>
            <person name="Zhu C."/>
            <person name="Berger M.F."/>
            <person name="Camargo A.A."/>
            <person name="Kelley F."/>
            <person name="McCarron S."/>
            <person name="Jepson D."/>
            <person name="Richardson A."/>
            <person name="Raphael J."/>
            <person name="Moreira D."/>
            <person name="Taycher E."/>
            <person name="Zuo D."/>
            <person name="Mohr S."/>
            <person name="Kane M.F."/>
            <person name="Williamson J."/>
            <person name="Simpson A.J.G."/>
            <person name="Bulyk M.L."/>
            <person name="Harlow E."/>
            <person name="Marsischky G."/>
            <person name="Kolodner R.D."/>
            <person name="LaBaer J."/>
        </authorList>
    </citation>
    <scope>NUCLEOTIDE SEQUENCE [GENOMIC DNA]</scope>
    <source>
        <strain>ATCC 204508 / S288c</strain>
    </source>
</reference>
<evidence type="ECO:0000305" key="1">
    <source>
    </source>
</evidence>
<organism>
    <name type="scientific">Saccharomyces cerevisiae (strain ATCC 204508 / S288c)</name>
    <name type="common">Baker's yeast</name>
    <dbReference type="NCBI Taxonomy" id="559292"/>
    <lineage>
        <taxon>Eukaryota</taxon>
        <taxon>Fungi</taxon>
        <taxon>Dikarya</taxon>
        <taxon>Ascomycota</taxon>
        <taxon>Saccharomycotina</taxon>
        <taxon>Saccharomycetes</taxon>
        <taxon>Saccharomycetales</taxon>
        <taxon>Saccharomycetaceae</taxon>
        <taxon>Saccharomyces</taxon>
    </lineage>
</organism>
<dbReference type="EMBL" id="U21094">
    <property type="protein sequence ID" value="AAB67524.1"/>
    <property type="molecule type" value="Genomic_DNA"/>
</dbReference>
<dbReference type="EMBL" id="AY693270">
    <property type="protein sequence ID" value="AAT93289.1"/>
    <property type="molecule type" value="Genomic_DNA"/>
</dbReference>
<dbReference type="PIR" id="S69321">
    <property type="entry name" value="S69321"/>
</dbReference>
<dbReference type="DIP" id="DIP-4468N"/>
<dbReference type="IntAct" id="O13576">
    <property type="interactions" value="1"/>
</dbReference>
<dbReference type="PaxDb" id="4932-YLR434C"/>
<dbReference type="EnsemblFungi" id="YLR434C_mRNA">
    <property type="protein sequence ID" value="YLR434C"/>
    <property type="gene ID" value="YLR434C"/>
</dbReference>
<dbReference type="AGR" id="SGD:S000004426"/>
<dbReference type="SGD" id="S000004426">
    <property type="gene designation" value="YLR434C"/>
</dbReference>
<dbReference type="HOGENOM" id="CLU_1972193_0_0_1"/>
<accession>O13576</accession>
<name>YL434_YEAST</name>
<proteinExistence type="uncertain"/>
<comment type="caution">
    <text evidence="1">Product of a dubious gene prediction unlikely to encode a functional protein. Because of that it is not part of the S.cerevisiae S288c complete/reference proteome set.</text>
</comment>